<sequence length="347" mass="38568">MTTTRVCIDSSVALKIVRHCQESAPSIVAGQLLGLDVDGELRISHAFAFPQNAAGGNPNSDDGLSLRLKAVAKYQPEMIDHLKEVNVDSNSVGWYQSTVLGRIYNASVIENLAVFQEKNPDSVVLVYDVAGSEVVSDTDPSSTGPQGHTTTTPSGFNLRAFRLSEEYLNVRKSGKFDTATLTENNLTYHDVLVELPVEIKNSNLATLLLYQLGQQYPNSPFAESSFSNLNVSVDPFLEKNIEAIFDSVDDFHYDQGNYNYYQRQMTREQAKITQWQQKRKAENAAREKDGRPALPTDEWKRLFKLPTEPSRQDNLLISAQLNEHCSVIEEFGAAVNSKLFATQGGLL</sequence>
<evidence type="ECO:0000255" key="1">
    <source>
        <dbReference type="HAMAP-Rule" id="MF_03007"/>
    </source>
</evidence>
<evidence type="ECO:0000255" key="2">
    <source>
        <dbReference type="PROSITE-ProRule" id="PRU01182"/>
    </source>
</evidence>
<evidence type="ECO:0000256" key="3">
    <source>
        <dbReference type="SAM" id="MobiDB-lite"/>
    </source>
</evidence>
<organism>
    <name type="scientific">Yarrowia lipolytica (strain CLIB 122 / E 150)</name>
    <name type="common">Yeast</name>
    <name type="synonym">Candida lipolytica</name>
    <dbReference type="NCBI Taxonomy" id="284591"/>
    <lineage>
        <taxon>Eukaryota</taxon>
        <taxon>Fungi</taxon>
        <taxon>Dikarya</taxon>
        <taxon>Ascomycota</taxon>
        <taxon>Saccharomycotina</taxon>
        <taxon>Dipodascomycetes</taxon>
        <taxon>Dipodascales</taxon>
        <taxon>Dipodascales incertae sedis</taxon>
        <taxon>Yarrowia</taxon>
    </lineage>
</organism>
<dbReference type="EMBL" id="CR382132">
    <property type="protein sequence ID" value="CAG78288.1"/>
    <property type="molecule type" value="Genomic_DNA"/>
</dbReference>
<dbReference type="RefSeq" id="XP_505479.1">
    <property type="nucleotide sequence ID" value="XM_505479.1"/>
</dbReference>
<dbReference type="SMR" id="Q6C1I3"/>
<dbReference type="STRING" id="284591.Q6C1I3"/>
<dbReference type="EnsemblFungi" id="CAG78288">
    <property type="protein sequence ID" value="CAG78288"/>
    <property type="gene ID" value="YALI0_F16005g"/>
</dbReference>
<dbReference type="KEGG" id="yli:2908618"/>
<dbReference type="VEuPathDB" id="FungiDB:YALI0_F16005g"/>
<dbReference type="HOGENOM" id="CLU_044094_1_0_1"/>
<dbReference type="InParanoid" id="Q6C1I3"/>
<dbReference type="OMA" id="WYQSTYF"/>
<dbReference type="OrthoDB" id="103927at4891"/>
<dbReference type="Proteomes" id="UP000001300">
    <property type="component" value="Chromosome F"/>
</dbReference>
<dbReference type="GO" id="GO:0016282">
    <property type="term" value="C:eukaryotic 43S preinitiation complex"/>
    <property type="evidence" value="ECO:0000318"/>
    <property type="project" value="GO_Central"/>
</dbReference>
<dbReference type="GO" id="GO:0033290">
    <property type="term" value="C:eukaryotic 48S preinitiation complex"/>
    <property type="evidence" value="ECO:0007669"/>
    <property type="project" value="UniProtKB-UniRule"/>
</dbReference>
<dbReference type="GO" id="GO:0005852">
    <property type="term" value="C:eukaryotic translation initiation factor 3 complex"/>
    <property type="evidence" value="ECO:0000318"/>
    <property type="project" value="GO_Central"/>
</dbReference>
<dbReference type="GO" id="GO:0008237">
    <property type="term" value="F:metallopeptidase activity"/>
    <property type="evidence" value="ECO:0000318"/>
    <property type="project" value="GO_Central"/>
</dbReference>
<dbReference type="GO" id="GO:0003743">
    <property type="term" value="F:translation initiation factor activity"/>
    <property type="evidence" value="ECO:0007669"/>
    <property type="project" value="UniProtKB-UniRule"/>
</dbReference>
<dbReference type="GO" id="GO:0001732">
    <property type="term" value="P:formation of cytoplasmic translation initiation complex"/>
    <property type="evidence" value="ECO:0007669"/>
    <property type="project" value="UniProtKB-UniRule"/>
</dbReference>
<dbReference type="GO" id="GO:0006413">
    <property type="term" value="P:translational initiation"/>
    <property type="evidence" value="ECO:0000318"/>
    <property type="project" value="GO_Central"/>
</dbReference>
<dbReference type="CDD" id="cd08065">
    <property type="entry name" value="MPN_eIF3h"/>
    <property type="match status" value="1"/>
</dbReference>
<dbReference type="Gene3D" id="3.40.140.10">
    <property type="entry name" value="Cytidine Deaminase, domain 2"/>
    <property type="match status" value="1"/>
</dbReference>
<dbReference type="HAMAP" id="MF_03007">
    <property type="entry name" value="eIF3h"/>
    <property type="match status" value="1"/>
</dbReference>
<dbReference type="InterPro" id="IPR027524">
    <property type="entry name" value="eIF3h"/>
</dbReference>
<dbReference type="InterPro" id="IPR045810">
    <property type="entry name" value="eIF3h_C"/>
</dbReference>
<dbReference type="InterPro" id="IPR000555">
    <property type="entry name" value="JAMM/MPN+_dom"/>
</dbReference>
<dbReference type="InterPro" id="IPR050242">
    <property type="entry name" value="JAMM_MPN+_peptidase_M67A"/>
</dbReference>
<dbReference type="InterPro" id="IPR037518">
    <property type="entry name" value="MPN"/>
</dbReference>
<dbReference type="PANTHER" id="PTHR10410">
    <property type="entry name" value="EUKARYOTIC TRANSLATION INITIATION FACTOR 3 -RELATED"/>
    <property type="match status" value="1"/>
</dbReference>
<dbReference type="Pfam" id="PF19445">
    <property type="entry name" value="eIF3h_C"/>
    <property type="match status" value="1"/>
</dbReference>
<dbReference type="Pfam" id="PF01398">
    <property type="entry name" value="JAB"/>
    <property type="match status" value="1"/>
</dbReference>
<dbReference type="PROSITE" id="PS50249">
    <property type="entry name" value="MPN"/>
    <property type="match status" value="1"/>
</dbReference>
<accession>Q6C1I3</accession>
<name>EIF3H_YARLI</name>
<keyword id="KW-0963">Cytoplasm</keyword>
<keyword id="KW-0396">Initiation factor</keyword>
<keyword id="KW-0648">Protein biosynthesis</keyword>
<keyword id="KW-1185">Reference proteome</keyword>
<reference key="1">
    <citation type="journal article" date="2004" name="Nature">
        <title>Genome evolution in yeasts.</title>
        <authorList>
            <person name="Dujon B."/>
            <person name="Sherman D."/>
            <person name="Fischer G."/>
            <person name="Durrens P."/>
            <person name="Casaregola S."/>
            <person name="Lafontaine I."/>
            <person name="de Montigny J."/>
            <person name="Marck C."/>
            <person name="Neuveglise C."/>
            <person name="Talla E."/>
            <person name="Goffard N."/>
            <person name="Frangeul L."/>
            <person name="Aigle M."/>
            <person name="Anthouard V."/>
            <person name="Babour A."/>
            <person name="Barbe V."/>
            <person name="Barnay S."/>
            <person name="Blanchin S."/>
            <person name="Beckerich J.-M."/>
            <person name="Beyne E."/>
            <person name="Bleykasten C."/>
            <person name="Boisrame A."/>
            <person name="Boyer J."/>
            <person name="Cattolico L."/>
            <person name="Confanioleri F."/>
            <person name="de Daruvar A."/>
            <person name="Despons L."/>
            <person name="Fabre E."/>
            <person name="Fairhead C."/>
            <person name="Ferry-Dumazet H."/>
            <person name="Groppi A."/>
            <person name="Hantraye F."/>
            <person name="Hennequin C."/>
            <person name="Jauniaux N."/>
            <person name="Joyet P."/>
            <person name="Kachouri R."/>
            <person name="Kerrest A."/>
            <person name="Koszul R."/>
            <person name="Lemaire M."/>
            <person name="Lesur I."/>
            <person name="Ma L."/>
            <person name="Muller H."/>
            <person name="Nicaud J.-M."/>
            <person name="Nikolski M."/>
            <person name="Oztas S."/>
            <person name="Ozier-Kalogeropoulos O."/>
            <person name="Pellenz S."/>
            <person name="Potier S."/>
            <person name="Richard G.-F."/>
            <person name="Straub M.-L."/>
            <person name="Suleau A."/>
            <person name="Swennen D."/>
            <person name="Tekaia F."/>
            <person name="Wesolowski-Louvel M."/>
            <person name="Westhof E."/>
            <person name="Wirth B."/>
            <person name="Zeniou-Meyer M."/>
            <person name="Zivanovic Y."/>
            <person name="Bolotin-Fukuhara M."/>
            <person name="Thierry A."/>
            <person name="Bouchier C."/>
            <person name="Caudron B."/>
            <person name="Scarpelli C."/>
            <person name="Gaillardin C."/>
            <person name="Weissenbach J."/>
            <person name="Wincker P."/>
            <person name="Souciet J.-L."/>
        </authorList>
    </citation>
    <scope>NUCLEOTIDE SEQUENCE [LARGE SCALE GENOMIC DNA]</scope>
    <source>
        <strain>CLIB 122 / E 150</strain>
    </source>
</reference>
<comment type="function">
    <text evidence="1">Component of the eukaryotic translation initiation factor 3 (eIF-3) complex, which is involved in protein synthesis of a specialized repertoire of mRNAs and, together with other initiation factors, stimulates binding of mRNA and methionyl-tRNAi to the 40S ribosome. The eIF-3 complex specifically targets and initiates translation of a subset of mRNAs involved in cell proliferation.</text>
</comment>
<comment type="subunit">
    <text evidence="1">Component of the eukaryotic translation initiation factor 3 (eIF-3) complex.</text>
</comment>
<comment type="subcellular location">
    <subcellularLocation>
        <location evidence="1">Cytoplasm</location>
    </subcellularLocation>
</comment>
<comment type="similarity">
    <text evidence="1">Belongs to the eIF-3 subunit H family.</text>
</comment>
<proteinExistence type="inferred from homology"/>
<gene>
    <name type="ordered locus">YALI0F16005g</name>
</gene>
<protein>
    <recommendedName>
        <fullName evidence="1">Eukaryotic translation initiation factor 3 subunit H</fullName>
        <shortName evidence="1">eIF3h</shortName>
    </recommendedName>
</protein>
<feature type="chain" id="PRO_0000365213" description="Eukaryotic translation initiation factor 3 subunit H">
    <location>
        <begin position="1"/>
        <end position="347"/>
    </location>
</feature>
<feature type="domain" description="MPN" evidence="2">
    <location>
        <begin position="6"/>
        <end position="149"/>
    </location>
</feature>
<feature type="region of interest" description="Disordered" evidence="3">
    <location>
        <begin position="136"/>
        <end position="155"/>
    </location>
</feature>
<feature type="compositionally biased region" description="Polar residues" evidence="3">
    <location>
        <begin position="138"/>
        <end position="155"/>
    </location>
</feature>